<comment type="function">
    <text evidence="1">Catalyzes the hydrolytic cleavage of the carbon-nitrogen bond in imidazolone-5-propanoate to yield N-formimidoyl-L-glutamate. It is the third step in the universal histidine degradation pathway.</text>
</comment>
<comment type="catalytic activity">
    <reaction evidence="1">
        <text>4-imidazolone-5-propanoate + H2O = N-formimidoyl-L-glutamate</text>
        <dbReference type="Rhea" id="RHEA:23660"/>
        <dbReference type="ChEBI" id="CHEBI:15377"/>
        <dbReference type="ChEBI" id="CHEBI:58928"/>
        <dbReference type="ChEBI" id="CHEBI:77893"/>
        <dbReference type="EC" id="3.5.2.7"/>
    </reaction>
</comment>
<comment type="cofactor">
    <cofactor evidence="1">
        <name>Zn(2+)</name>
        <dbReference type="ChEBI" id="CHEBI:29105"/>
    </cofactor>
    <cofactor evidence="1">
        <name>Fe(3+)</name>
        <dbReference type="ChEBI" id="CHEBI:29034"/>
    </cofactor>
    <text evidence="1">Binds 1 zinc or iron ion per subunit.</text>
</comment>
<comment type="pathway">
    <text evidence="1">Amino-acid degradation; L-histidine degradation into L-glutamate; N-formimidoyl-L-glutamate from L-histidine: step 3/3.</text>
</comment>
<comment type="subcellular location">
    <subcellularLocation>
        <location evidence="1">Cytoplasm</location>
    </subcellularLocation>
</comment>
<comment type="similarity">
    <text evidence="1">Belongs to the metallo-dependent hydrolases superfamily. HutI family.</text>
</comment>
<reference key="1">
    <citation type="journal article" date="2007" name="Proc. Natl. Acad. Sci. U.S.A.">
        <title>Genome and proteome of long-chain alkane degrading Geobacillus thermodenitrificans NG80-2 isolated from a deep-subsurface oil reservoir.</title>
        <authorList>
            <person name="Feng L."/>
            <person name="Wang W."/>
            <person name="Cheng J."/>
            <person name="Ren Y."/>
            <person name="Zhao G."/>
            <person name="Gao C."/>
            <person name="Tang Y."/>
            <person name="Liu X."/>
            <person name="Han W."/>
            <person name="Peng X."/>
            <person name="Liu R."/>
            <person name="Wang L."/>
        </authorList>
    </citation>
    <scope>NUCLEOTIDE SEQUENCE [LARGE SCALE GENOMIC DNA]</scope>
    <source>
        <strain>NG80-2</strain>
    </source>
</reference>
<evidence type="ECO:0000255" key="1">
    <source>
        <dbReference type="HAMAP-Rule" id="MF_00372"/>
    </source>
</evidence>
<protein>
    <recommendedName>
        <fullName evidence="1">Imidazolonepropionase</fullName>
        <ecNumber evidence="1">3.5.2.7</ecNumber>
    </recommendedName>
    <alternativeName>
        <fullName evidence="1">Imidazolone-5-propionate hydrolase</fullName>
    </alternativeName>
</protein>
<keyword id="KW-0963">Cytoplasm</keyword>
<keyword id="KW-0369">Histidine metabolism</keyword>
<keyword id="KW-0378">Hydrolase</keyword>
<keyword id="KW-0408">Iron</keyword>
<keyword id="KW-0479">Metal-binding</keyword>
<keyword id="KW-0862">Zinc</keyword>
<gene>
    <name evidence="1" type="primary">hutI</name>
    <name type="ordered locus">GTNG_1226</name>
</gene>
<proteinExistence type="inferred from homology"/>
<accession>A4IMP4</accession>
<organism>
    <name type="scientific">Geobacillus thermodenitrificans (strain NG80-2)</name>
    <dbReference type="NCBI Taxonomy" id="420246"/>
    <lineage>
        <taxon>Bacteria</taxon>
        <taxon>Bacillati</taxon>
        <taxon>Bacillota</taxon>
        <taxon>Bacilli</taxon>
        <taxon>Bacillales</taxon>
        <taxon>Anoxybacillaceae</taxon>
        <taxon>Geobacillus</taxon>
    </lineage>
</organism>
<feature type="chain" id="PRO_0000306462" description="Imidazolonepropionase">
    <location>
        <begin position="1"/>
        <end position="424"/>
    </location>
</feature>
<feature type="binding site" evidence="1">
    <location>
        <position position="84"/>
    </location>
    <ligand>
        <name>Fe(3+)</name>
        <dbReference type="ChEBI" id="CHEBI:29034"/>
    </ligand>
</feature>
<feature type="binding site" evidence="1">
    <location>
        <position position="84"/>
    </location>
    <ligand>
        <name>Zn(2+)</name>
        <dbReference type="ChEBI" id="CHEBI:29105"/>
    </ligand>
</feature>
<feature type="binding site" evidence="1">
    <location>
        <position position="86"/>
    </location>
    <ligand>
        <name>Fe(3+)</name>
        <dbReference type="ChEBI" id="CHEBI:29034"/>
    </ligand>
</feature>
<feature type="binding site" evidence="1">
    <location>
        <position position="86"/>
    </location>
    <ligand>
        <name>Zn(2+)</name>
        <dbReference type="ChEBI" id="CHEBI:29105"/>
    </ligand>
</feature>
<feature type="binding site" evidence="1">
    <location>
        <position position="93"/>
    </location>
    <ligand>
        <name>4-imidazolone-5-propanoate</name>
        <dbReference type="ChEBI" id="CHEBI:77893"/>
    </ligand>
</feature>
<feature type="binding site" evidence="1">
    <location>
        <position position="156"/>
    </location>
    <ligand>
        <name>4-imidazolone-5-propanoate</name>
        <dbReference type="ChEBI" id="CHEBI:77893"/>
    </ligand>
</feature>
<feature type="binding site" evidence="1">
    <location>
        <position position="156"/>
    </location>
    <ligand>
        <name>N-formimidoyl-L-glutamate</name>
        <dbReference type="ChEBI" id="CHEBI:58928"/>
    </ligand>
</feature>
<feature type="binding site" evidence="1">
    <location>
        <position position="189"/>
    </location>
    <ligand>
        <name>4-imidazolone-5-propanoate</name>
        <dbReference type="ChEBI" id="CHEBI:77893"/>
    </ligand>
</feature>
<feature type="binding site" evidence="1">
    <location>
        <position position="254"/>
    </location>
    <ligand>
        <name>Fe(3+)</name>
        <dbReference type="ChEBI" id="CHEBI:29034"/>
    </ligand>
</feature>
<feature type="binding site" evidence="1">
    <location>
        <position position="254"/>
    </location>
    <ligand>
        <name>Zn(2+)</name>
        <dbReference type="ChEBI" id="CHEBI:29105"/>
    </ligand>
</feature>
<feature type="binding site" evidence="1">
    <location>
        <position position="257"/>
    </location>
    <ligand>
        <name>4-imidazolone-5-propanoate</name>
        <dbReference type="ChEBI" id="CHEBI:77893"/>
    </ligand>
</feature>
<feature type="binding site" evidence="1">
    <location>
        <position position="328"/>
    </location>
    <ligand>
        <name>Fe(3+)</name>
        <dbReference type="ChEBI" id="CHEBI:29034"/>
    </ligand>
</feature>
<feature type="binding site" evidence="1">
    <location>
        <position position="328"/>
    </location>
    <ligand>
        <name>Zn(2+)</name>
        <dbReference type="ChEBI" id="CHEBI:29105"/>
    </ligand>
</feature>
<feature type="binding site" evidence="1">
    <location>
        <position position="330"/>
    </location>
    <ligand>
        <name>N-formimidoyl-L-glutamate</name>
        <dbReference type="ChEBI" id="CHEBI:58928"/>
    </ligand>
</feature>
<feature type="binding site" evidence="1">
    <location>
        <position position="332"/>
    </location>
    <ligand>
        <name>N-formimidoyl-L-glutamate</name>
        <dbReference type="ChEBI" id="CHEBI:58928"/>
    </ligand>
</feature>
<feature type="binding site" evidence="1">
    <location>
        <position position="333"/>
    </location>
    <ligand>
        <name>4-imidazolone-5-propanoate</name>
        <dbReference type="ChEBI" id="CHEBI:77893"/>
    </ligand>
</feature>
<dbReference type="EC" id="3.5.2.7" evidence="1"/>
<dbReference type="EMBL" id="CP000557">
    <property type="protein sequence ID" value="ABO66598.1"/>
    <property type="molecule type" value="Genomic_DNA"/>
</dbReference>
<dbReference type="RefSeq" id="WP_011887219.1">
    <property type="nucleotide sequence ID" value="NC_009328.1"/>
</dbReference>
<dbReference type="SMR" id="A4IMP4"/>
<dbReference type="KEGG" id="gtn:GTNG_1226"/>
<dbReference type="eggNOG" id="COG1228">
    <property type="taxonomic scope" value="Bacteria"/>
</dbReference>
<dbReference type="HOGENOM" id="CLU_041647_0_1_9"/>
<dbReference type="UniPathway" id="UPA00379">
    <property type="reaction ID" value="UER00551"/>
</dbReference>
<dbReference type="Proteomes" id="UP000001578">
    <property type="component" value="Chromosome"/>
</dbReference>
<dbReference type="GO" id="GO:0005737">
    <property type="term" value="C:cytoplasm"/>
    <property type="evidence" value="ECO:0007669"/>
    <property type="project" value="UniProtKB-SubCell"/>
</dbReference>
<dbReference type="GO" id="GO:0050480">
    <property type="term" value="F:imidazolonepropionase activity"/>
    <property type="evidence" value="ECO:0007669"/>
    <property type="project" value="UniProtKB-UniRule"/>
</dbReference>
<dbReference type="GO" id="GO:0005506">
    <property type="term" value="F:iron ion binding"/>
    <property type="evidence" value="ECO:0007669"/>
    <property type="project" value="UniProtKB-UniRule"/>
</dbReference>
<dbReference type="GO" id="GO:0008270">
    <property type="term" value="F:zinc ion binding"/>
    <property type="evidence" value="ECO:0007669"/>
    <property type="project" value="UniProtKB-UniRule"/>
</dbReference>
<dbReference type="GO" id="GO:0019556">
    <property type="term" value="P:L-histidine catabolic process to glutamate and formamide"/>
    <property type="evidence" value="ECO:0007669"/>
    <property type="project" value="UniProtKB-UniPathway"/>
</dbReference>
<dbReference type="GO" id="GO:0019557">
    <property type="term" value="P:L-histidine catabolic process to glutamate and formate"/>
    <property type="evidence" value="ECO:0007669"/>
    <property type="project" value="UniProtKB-UniPathway"/>
</dbReference>
<dbReference type="CDD" id="cd01296">
    <property type="entry name" value="Imidazolone-5PH"/>
    <property type="match status" value="1"/>
</dbReference>
<dbReference type="FunFam" id="3.20.20.140:FF:000007">
    <property type="entry name" value="Imidazolonepropionase"/>
    <property type="match status" value="1"/>
</dbReference>
<dbReference type="Gene3D" id="3.20.20.140">
    <property type="entry name" value="Metal-dependent hydrolases"/>
    <property type="match status" value="1"/>
</dbReference>
<dbReference type="Gene3D" id="2.30.40.10">
    <property type="entry name" value="Urease, subunit C, domain 1"/>
    <property type="match status" value="1"/>
</dbReference>
<dbReference type="HAMAP" id="MF_00372">
    <property type="entry name" value="HutI"/>
    <property type="match status" value="1"/>
</dbReference>
<dbReference type="InterPro" id="IPR006680">
    <property type="entry name" value="Amidohydro-rel"/>
</dbReference>
<dbReference type="InterPro" id="IPR005920">
    <property type="entry name" value="HutI"/>
</dbReference>
<dbReference type="InterPro" id="IPR011059">
    <property type="entry name" value="Metal-dep_hydrolase_composite"/>
</dbReference>
<dbReference type="InterPro" id="IPR032466">
    <property type="entry name" value="Metal_Hydrolase"/>
</dbReference>
<dbReference type="NCBIfam" id="TIGR01224">
    <property type="entry name" value="hutI"/>
    <property type="match status" value="1"/>
</dbReference>
<dbReference type="PANTHER" id="PTHR42752">
    <property type="entry name" value="IMIDAZOLONEPROPIONASE"/>
    <property type="match status" value="1"/>
</dbReference>
<dbReference type="PANTHER" id="PTHR42752:SF1">
    <property type="entry name" value="IMIDAZOLONEPROPIONASE-RELATED"/>
    <property type="match status" value="1"/>
</dbReference>
<dbReference type="Pfam" id="PF01979">
    <property type="entry name" value="Amidohydro_1"/>
    <property type="match status" value="1"/>
</dbReference>
<dbReference type="SUPFAM" id="SSF51338">
    <property type="entry name" value="Composite domain of metallo-dependent hydrolases"/>
    <property type="match status" value="1"/>
</dbReference>
<dbReference type="SUPFAM" id="SSF51556">
    <property type="entry name" value="Metallo-dependent hydrolases"/>
    <property type="match status" value="1"/>
</dbReference>
<sequence length="424" mass="46228">MRPLFIRRARQLVTLAGSSAAPLVREKMNDLQIIENGSVWIERGVIIAVGPDDELAHRFADRIGEADVIDARGKTVTPGLIDPHTHLVYAGSREHEWTMRLRGATYMEIMNAGGGIHATTKATREASEEMLYEESKRRLDLFLLHGVTTVEAKSGYGLSFEGEIKQLEVAKRLHDTHPVDVVSTFLGAHAVPPEWKDDRDGYIRLIMEVMIPEVSRRGLAEFNDVFCERGVFTPDEARRILEAGKAHGLTPKIHADEIEPYGGAELAAEVGAISADHLLRASDEGLRRMAERGVIGVLLPGTAFFLMTQAADARRLIDNGVPVALATDCNPGSSPTVSLPLVMSLACLHMRMTPAEALAAATINAAHAIGRSHVIGSLEPGKKADLAIFNAANYMQIMYYYGVNHTEMVIKGGKIVVNEGKVCI</sequence>
<name>HUTI_GEOTN</name>